<protein>
    <recommendedName>
        <fullName evidence="7">Meiotic drive suppressor wtf26</fullName>
    </recommendedName>
</protein>
<proteinExistence type="inferred from homology"/>
<dbReference type="EMBL" id="KY652742">
    <property type="protein sequence ID" value="ASF62183.1"/>
    <property type="molecule type" value="Genomic_DNA"/>
</dbReference>
<dbReference type="SMR" id="A0A218N036"/>
<dbReference type="GO" id="GO:0005774">
    <property type="term" value="C:vacuolar membrane"/>
    <property type="evidence" value="ECO:0007669"/>
    <property type="project" value="UniProtKB-SubCell"/>
</dbReference>
<dbReference type="GO" id="GO:0110134">
    <property type="term" value="P:meiotic drive"/>
    <property type="evidence" value="ECO:0007669"/>
    <property type="project" value="InterPro"/>
</dbReference>
<dbReference type="InterPro" id="IPR004982">
    <property type="entry name" value="WTF"/>
</dbReference>
<dbReference type="Pfam" id="PF03303">
    <property type="entry name" value="WTF"/>
    <property type="match status" value="1"/>
</dbReference>
<reference evidence="9" key="1">
    <citation type="journal article" date="2017" name="Elife">
        <title>wtf genes are prolific dual poison-antidote meiotic drivers.</title>
        <authorList>
            <person name="Nuckolls N.L."/>
            <person name="Bravo Nunez M.A."/>
            <person name="Eickbush M.T."/>
            <person name="Young J.M."/>
            <person name="Lange J.J."/>
            <person name="Yu J.S."/>
            <person name="Smith G.R."/>
            <person name="Jaspersen S.L."/>
            <person name="Malik H.S."/>
            <person name="Zanders S.E."/>
        </authorList>
    </citation>
    <scope>NUCLEOTIDE SEQUENCE [GENOMIC DNA]</scope>
    <scope>FUNCTION</scope>
</reference>
<gene>
    <name evidence="9" type="primary">wtf26</name>
</gene>
<keyword id="KW-0472">Membrane</keyword>
<keyword id="KW-0812">Transmembrane</keyword>
<keyword id="KW-1133">Transmembrane helix</keyword>
<keyword id="KW-0926">Vacuole</keyword>
<comment type="function">
    <text evidence="1 2 6">Acts as a suppressor component of the dual wtf meiotic drive system, and can suppress but not confer meiotic drive by compatible poisons (PubMed:28631612). Wtf meiotic drive systems promote unequal transmission of alleles from the parental zygote to progeny spores by encoding a poison and an antidote from the same locus; the poison is trans-acting and forms toxic aggregates in all spores within an ascus, wherease the antidote is spore-specific and targets aggregates for degradation by the vacuole (By similarity). Meiotic drive by wtf systems therefore lead to poisoning of all progeny that do not inherit the dual poison/antidote allele, or express a compatible antidote (By similarity).</text>
</comment>
<comment type="subunit">
    <text evidence="1 3">Homomer (By similarity). Interacts with other proteins that exhibit high sequence similarity (By similarity).</text>
</comment>
<comment type="subcellular location">
    <subcellularLocation>
        <location evidence="1 4">Spore membrane</location>
        <topology evidence="4">Multi-pass membrane protein</topology>
    </subcellularLocation>
    <subcellularLocation>
        <location evidence="1 4">Vacuole membrane</location>
        <topology evidence="4">Multi-pass membrane protein</topology>
    </subcellularLocation>
</comment>
<comment type="similarity">
    <text evidence="8">Belongs to the WTF family.</text>
</comment>
<sequence length="321" mass="35975">MNNNYTSLKSSIDEEGELKTDHEIDLEKGLLPEYNSEEEGALPTYSDHARSSNPPNTHRENHSSGTTDDSSPFLIKLLISFTPIVLLNALAVCYLTYKDAFFKDYGAAEWTLFGFWCLVCTLALIILTYFYETWTKAVKVTAIGLFNIRREMMIIIWILWLIICCILFGCVKDGRLNLNKALIYSTCTISAVLFLIVSSVCIPMWTLWRALSGMLQVLGIHGIIALLVNGSMSLFGKHFGWRGYEIEGFVLFFTGNALFLYEMERPGVLKRMRNTTGNVIGYILEGIGNIGNAIGRIGNAFRGANDNNDIPLGEMEVESEV</sequence>
<name>WTF26_SCHKA</name>
<organism evidence="9">
    <name type="scientific">Schizosaccharomyces kambucha</name>
    <name type="common">Fission yeast</name>
    <dbReference type="NCBI Taxonomy" id="204045"/>
    <lineage>
        <taxon>Eukaryota</taxon>
        <taxon>Fungi</taxon>
        <taxon>Dikarya</taxon>
        <taxon>Ascomycota</taxon>
        <taxon>Taphrinomycotina</taxon>
        <taxon>Schizosaccharomycetes</taxon>
        <taxon>Schizosaccharomycetales</taxon>
        <taxon>Schizosaccharomycetaceae</taxon>
        <taxon>Schizosaccharomyces</taxon>
    </lineage>
</organism>
<evidence type="ECO:0000250" key="1">
    <source>
        <dbReference type="UniProtKB" id="A0A218N034"/>
    </source>
</evidence>
<evidence type="ECO:0000250" key="2">
    <source>
        <dbReference type="UniProtKB" id="A0A482ATU4"/>
    </source>
</evidence>
<evidence type="ECO:0000250" key="3">
    <source>
        <dbReference type="UniProtKB" id="O74420"/>
    </source>
</evidence>
<evidence type="ECO:0000255" key="4"/>
<evidence type="ECO:0000256" key="5">
    <source>
        <dbReference type="SAM" id="MobiDB-lite"/>
    </source>
</evidence>
<evidence type="ECO:0000269" key="6">
    <source>
    </source>
</evidence>
<evidence type="ECO:0000303" key="7">
    <source>
    </source>
</evidence>
<evidence type="ECO:0000305" key="8"/>
<evidence type="ECO:0000312" key="9">
    <source>
        <dbReference type="EMBL" id="ASF62183.1"/>
    </source>
</evidence>
<accession>A0A218N036</accession>
<feature type="chain" id="PRO_0000452267" description="Meiotic drive suppressor wtf26">
    <location>
        <begin position="1"/>
        <end position="321"/>
    </location>
</feature>
<feature type="transmembrane region" description="Helical" evidence="4">
    <location>
        <begin position="73"/>
        <end position="93"/>
    </location>
</feature>
<feature type="transmembrane region" description="Helical" evidence="4">
    <location>
        <begin position="110"/>
        <end position="130"/>
    </location>
</feature>
<feature type="transmembrane region" description="Helical" evidence="4">
    <location>
        <begin position="151"/>
        <end position="171"/>
    </location>
</feature>
<feature type="transmembrane region" description="Helical" evidence="4">
    <location>
        <begin position="188"/>
        <end position="208"/>
    </location>
</feature>
<feature type="transmembrane region" description="Helical" evidence="4">
    <location>
        <begin position="210"/>
        <end position="230"/>
    </location>
</feature>
<feature type="transmembrane region" description="Helical" evidence="4">
    <location>
        <begin position="243"/>
        <end position="263"/>
    </location>
</feature>
<feature type="region of interest" description="Disordered" evidence="5">
    <location>
        <begin position="29"/>
        <end position="68"/>
    </location>
</feature>